<comment type="function">
    <text evidence="1">Catalyzes the isomerization between 2-isopropylmalate and 3-isopropylmalate, via the formation of 2-isopropylmaleate.</text>
</comment>
<comment type="catalytic activity">
    <reaction>
        <text>(2R,3S)-3-isopropylmalate = (2S)-2-isopropylmalate</text>
        <dbReference type="Rhea" id="RHEA:32287"/>
        <dbReference type="ChEBI" id="CHEBI:1178"/>
        <dbReference type="ChEBI" id="CHEBI:35121"/>
        <dbReference type="EC" id="4.2.1.33"/>
    </reaction>
</comment>
<comment type="cofactor">
    <cofactor evidence="1">
        <name>[4Fe-4S] cluster</name>
        <dbReference type="ChEBI" id="CHEBI:49883"/>
    </cofactor>
    <text evidence="1">Binds 1 [4Fe-4S] cluster per subunit.</text>
</comment>
<comment type="pathway">
    <text>Amino-acid biosynthesis; L-leucine biosynthesis; L-leucine from 3-methyl-2-oxobutanoate: step 2/4.</text>
</comment>
<comment type="subunit">
    <text>Heterodimer of LeuC and LeuD.</text>
</comment>
<comment type="similarity">
    <text evidence="2">Belongs to the aconitase/IPM isomerase family. LeuC type 1 subfamily.</text>
</comment>
<organism>
    <name type="scientific">Cupriavidus necator</name>
    <name type="common">Alcaligenes eutrophus</name>
    <name type="synonym">Ralstonia eutropha</name>
    <dbReference type="NCBI Taxonomy" id="106590"/>
    <lineage>
        <taxon>Bacteria</taxon>
        <taxon>Pseudomonadati</taxon>
        <taxon>Pseudomonadota</taxon>
        <taxon>Betaproteobacteria</taxon>
        <taxon>Burkholderiales</taxon>
        <taxon>Burkholderiaceae</taxon>
        <taxon>Cupriavidus</taxon>
    </lineage>
</organism>
<feature type="chain" id="PRO_0000076791" description="3-isopropylmalate dehydratase large subunit">
    <location>
        <begin position="1" status="less than"/>
        <end position="267"/>
    </location>
</feature>
<feature type="binding site" evidence="1">
    <location>
        <position position="146"/>
    </location>
    <ligand>
        <name>[4Fe-4S] cluster</name>
        <dbReference type="ChEBI" id="CHEBI:49883"/>
    </ligand>
</feature>
<feature type="binding site" evidence="1">
    <location>
        <position position="206"/>
    </location>
    <ligand>
        <name>[4Fe-4S] cluster</name>
        <dbReference type="ChEBI" id="CHEBI:49883"/>
    </ligand>
</feature>
<feature type="binding site" evidence="1">
    <location>
        <position position="209"/>
    </location>
    <ligand>
        <name>[4Fe-4S] cluster</name>
        <dbReference type="ChEBI" id="CHEBI:49883"/>
    </ligand>
</feature>
<feature type="non-terminal residue">
    <location>
        <position position="1"/>
    </location>
</feature>
<keyword id="KW-0004">4Fe-4S</keyword>
<keyword id="KW-0028">Amino-acid biosynthesis</keyword>
<keyword id="KW-0100">Branched-chain amino acid biosynthesis</keyword>
<keyword id="KW-0408">Iron</keyword>
<keyword id="KW-0411">Iron-sulfur</keyword>
<keyword id="KW-0432">Leucine biosynthesis</keyword>
<keyword id="KW-0456">Lyase</keyword>
<keyword id="KW-0479">Metal-binding</keyword>
<name>LEUC_CUPNE</name>
<protein>
    <recommendedName>
        <fullName>3-isopropylmalate dehydratase large subunit</fullName>
        <ecNumber>4.2.1.33</ecNumber>
    </recommendedName>
    <alternativeName>
        <fullName>Alpha-IPM isomerase</fullName>
        <shortName>IPMI</shortName>
    </alternativeName>
    <alternativeName>
        <fullName>Isopropylmalate isomerase</fullName>
    </alternativeName>
</protein>
<accession>Q44023</accession>
<reference key="1">
    <citation type="journal article" date="1995" name="Eur. J. Biochem.">
        <title>Metabolic pathway for biosynthesis of poly(3-hydroxybutyrate-co-4-hydroxybutyrate) from 4-hydroxybutyrate by Alcaligenes eutrophus.</title>
        <authorList>
            <person name="Valentin H.E."/>
            <person name="Zwingmann G."/>
            <person name="Schoenebaum A."/>
            <person name="Steinbuechel A."/>
        </authorList>
    </citation>
    <scope>NUCLEOTIDE SEQUENCE [GENOMIC DNA]</scope>
    <source>
        <strain>H16 / SK4040</strain>
    </source>
</reference>
<gene>
    <name type="primary">leuC</name>
</gene>
<dbReference type="EC" id="4.2.1.33"/>
<dbReference type="EMBL" id="L36817">
    <property type="protein sequence ID" value="AAC41429.1"/>
    <property type="molecule type" value="Genomic_DNA"/>
</dbReference>
<dbReference type="PIR" id="I39573">
    <property type="entry name" value="I39573"/>
</dbReference>
<dbReference type="SMR" id="Q44023"/>
<dbReference type="UniPathway" id="UPA00048">
    <property type="reaction ID" value="UER00071"/>
</dbReference>
<dbReference type="GO" id="GO:0003861">
    <property type="term" value="F:3-isopropylmalate dehydratase activity"/>
    <property type="evidence" value="ECO:0007669"/>
    <property type="project" value="UniProtKB-EC"/>
</dbReference>
<dbReference type="GO" id="GO:0051539">
    <property type="term" value="F:4 iron, 4 sulfur cluster binding"/>
    <property type="evidence" value="ECO:0007669"/>
    <property type="project" value="UniProtKB-KW"/>
</dbReference>
<dbReference type="GO" id="GO:0046872">
    <property type="term" value="F:metal ion binding"/>
    <property type="evidence" value="ECO:0007669"/>
    <property type="project" value="UniProtKB-KW"/>
</dbReference>
<dbReference type="GO" id="GO:0009098">
    <property type="term" value="P:L-leucine biosynthetic process"/>
    <property type="evidence" value="ECO:0007669"/>
    <property type="project" value="UniProtKB-UniPathway"/>
</dbReference>
<dbReference type="Gene3D" id="3.30.499.10">
    <property type="entry name" value="Aconitase, domain 3"/>
    <property type="match status" value="2"/>
</dbReference>
<dbReference type="InterPro" id="IPR015931">
    <property type="entry name" value="Acnase/IPM_dHydase_lsu_aba_1/3"/>
</dbReference>
<dbReference type="InterPro" id="IPR001030">
    <property type="entry name" value="Acoase/IPM_deHydtase_lsu_aba"/>
</dbReference>
<dbReference type="InterPro" id="IPR018136">
    <property type="entry name" value="Aconitase_4Fe-4S_BS"/>
</dbReference>
<dbReference type="InterPro" id="IPR036008">
    <property type="entry name" value="Aconitase_4Fe-4S_dom"/>
</dbReference>
<dbReference type="InterPro" id="IPR050067">
    <property type="entry name" value="IPM_dehydratase_rel_enz"/>
</dbReference>
<dbReference type="PANTHER" id="PTHR43822:SF9">
    <property type="entry name" value="3-ISOPROPYLMALATE DEHYDRATASE"/>
    <property type="match status" value="1"/>
</dbReference>
<dbReference type="PANTHER" id="PTHR43822">
    <property type="entry name" value="HOMOACONITASE, MITOCHONDRIAL-RELATED"/>
    <property type="match status" value="1"/>
</dbReference>
<dbReference type="Pfam" id="PF00330">
    <property type="entry name" value="Aconitase"/>
    <property type="match status" value="1"/>
</dbReference>
<dbReference type="PRINTS" id="PR00415">
    <property type="entry name" value="ACONITASE"/>
</dbReference>
<dbReference type="SUPFAM" id="SSF53732">
    <property type="entry name" value="Aconitase iron-sulfur domain"/>
    <property type="match status" value="1"/>
</dbReference>
<dbReference type="PROSITE" id="PS00450">
    <property type="entry name" value="ACONITASE_1"/>
    <property type="match status" value="1"/>
</dbReference>
<proteinExistence type="inferred from homology"/>
<evidence type="ECO:0000250" key="1"/>
<evidence type="ECO:0000305" key="2"/>
<sequence length="267" mass="28516">EFGGSAVRSLPVEARLTLCNLAVEFSAFSGIVAPDDTVFEYLAGRPYAPAGAQWEPALWHWRSLYSDADAVFDRELSVDCRQLAPMVTWGTSPQHGVAVDGAVPNPAMAIDADTRQAMERALSYMDLRPGQRMADIAIDAAFIGSCTNSRLSDLRSAAGVLAGRKVAPGVTAICVPVSSAVKRAAEAEGLDRVFREAGFEWRESGCSMCFYAGGESFGHRQRVISSTNRNFESRQGPQTRTHLAGPATVAASAVLGRIADPRRPPGA</sequence>